<sequence>MTCCNQQSSQPKTTTNCAESSCYKKTWSDHRGTRIERGCGCPQVKPGIKLECCHTNECNN</sequence>
<name>3S11_HYDSC</name>
<accession>P68415</accession>
<accession>P01436</accession>
<accession>P25492</accession>
<comment type="function">
    <text evidence="2">Binds to muscle nicotinic acetylcholine receptor (nAChR) and inhibit acetylcholine from binding to the receptor, thereby impairing neuromuscular transmission.</text>
</comment>
<comment type="subcellular location">
    <subcellularLocation>
        <location evidence="3">Secreted</location>
    </subcellularLocation>
</comment>
<comment type="tissue specificity">
    <text evidence="4">Expressed by the venom gland.</text>
</comment>
<comment type="toxic dose">
    <text evidence="3">LD(50) is 0.2 mg/kg by intravenous injection.</text>
</comment>
<comment type="similarity">
    <text evidence="4">Belongs to the three-finger toxin family. Short-chain subfamily. Type I alpha-neurotoxin sub-subfamily.</text>
</comment>
<dbReference type="PIR" id="A01705">
    <property type="entry name" value="N1EY1"/>
</dbReference>
<dbReference type="SMR" id="P68415"/>
<dbReference type="GO" id="GO:0005576">
    <property type="term" value="C:extracellular region"/>
    <property type="evidence" value="ECO:0007669"/>
    <property type="project" value="UniProtKB-SubCell"/>
</dbReference>
<dbReference type="GO" id="GO:0030550">
    <property type="term" value="F:acetylcholine receptor inhibitor activity"/>
    <property type="evidence" value="ECO:0007669"/>
    <property type="project" value="UniProtKB-KW"/>
</dbReference>
<dbReference type="GO" id="GO:0099106">
    <property type="term" value="F:ion channel regulator activity"/>
    <property type="evidence" value="ECO:0007669"/>
    <property type="project" value="UniProtKB-KW"/>
</dbReference>
<dbReference type="GO" id="GO:0090729">
    <property type="term" value="F:toxin activity"/>
    <property type="evidence" value="ECO:0007669"/>
    <property type="project" value="UniProtKB-KW"/>
</dbReference>
<dbReference type="CDD" id="cd00206">
    <property type="entry name" value="TFP_snake_toxin"/>
    <property type="match status" value="1"/>
</dbReference>
<dbReference type="Gene3D" id="2.10.60.10">
    <property type="entry name" value="CD59"/>
    <property type="match status" value="1"/>
</dbReference>
<dbReference type="InterPro" id="IPR003571">
    <property type="entry name" value="Snake_3FTx"/>
</dbReference>
<dbReference type="InterPro" id="IPR045860">
    <property type="entry name" value="Snake_toxin-like_sf"/>
</dbReference>
<dbReference type="InterPro" id="IPR018354">
    <property type="entry name" value="Snake_toxin_con_site"/>
</dbReference>
<dbReference type="InterPro" id="IPR054131">
    <property type="entry name" value="Toxin_cobra-type"/>
</dbReference>
<dbReference type="Pfam" id="PF21947">
    <property type="entry name" value="Toxin_cobra-type"/>
    <property type="match status" value="1"/>
</dbReference>
<dbReference type="SUPFAM" id="SSF57302">
    <property type="entry name" value="Snake toxin-like"/>
    <property type="match status" value="1"/>
</dbReference>
<dbReference type="PROSITE" id="PS00272">
    <property type="entry name" value="SNAKE_TOXIN"/>
    <property type="match status" value="1"/>
</dbReference>
<keyword id="KW-0008">Acetylcholine receptor inhibiting toxin</keyword>
<keyword id="KW-0903">Direct protein sequencing</keyword>
<keyword id="KW-1015">Disulfide bond</keyword>
<keyword id="KW-0872">Ion channel impairing toxin</keyword>
<keyword id="KW-0528">Neurotoxin</keyword>
<keyword id="KW-0629">Postsynaptic neurotoxin</keyword>
<keyword id="KW-0964">Secreted</keyword>
<keyword id="KW-0800">Toxin</keyword>
<feature type="chain" id="PRO_0000093576" description="Short neurotoxin 1" evidence="3">
    <location>
        <begin position="1"/>
        <end position="60"/>
    </location>
</feature>
<feature type="disulfide bond" evidence="1">
    <location>
        <begin position="3"/>
        <end position="22"/>
    </location>
</feature>
<feature type="disulfide bond" evidence="1">
    <location>
        <begin position="17"/>
        <end position="39"/>
    </location>
</feature>
<feature type="disulfide bond" evidence="1">
    <location>
        <begin position="41"/>
        <end position="52"/>
    </location>
</feature>
<feature type="disulfide bond" evidence="1">
    <location>
        <begin position="53"/>
        <end position="58"/>
    </location>
</feature>
<reference key="1">
    <citation type="journal article" date="1972" name="Biochemistry">
        <title>Amino acid sequences of the two principal neurotoxins of Enhydrina schistosa venom.</title>
        <authorList>
            <person name="Fryklund L."/>
            <person name="Eaker D."/>
            <person name="Karlsson E."/>
        </authorList>
    </citation>
    <scope>PROTEIN SEQUENCE</scope>
    <scope>TOXIC DOSE</scope>
    <scope>SUBCELLULAR LOCATION</scope>
    <source>
        <tissue>Venom</tissue>
    </source>
</reference>
<organism>
    <name type="scientific">Hydrophis schistosus</name>
    <name type="common">Beaked sea snake</name>
    <name type="synonym">Enhydrina schistosa</name>
    <dbReference type="NCBI Taxonomy" id="8682"/>
    <lineage>
        <taxon>Eukaryota</taxon>
        <taxon>Metazoa</taxon>
        <taxon>Chordata</taxon>
        <taxon>Craniata</taxon>
        <taxon>Vertebrata</taxon>
        <taxon>Euteleostomi</taxon>
        <taxon>Lepidosauria</taxon>
        <taxon>Squamata</taxon>
        <taxon>Bifurcata</taxon>
        <taxon>Unidentata</taxon>
        <taxon>Episquamata</taxon>
        <taxon>Toxicofera</taxon>
        <taxon>Serpentes</taxon>
        <taxon>Colubroidea</taxon>
        <taxon>Elapidae</taxon>
        <taxon>Hydrophiinae</taxon>
        <taxon>Hydrophis</taxon>
    </lineage>
</organism>
<protein>
    <recommendedName>
        <fullName>Short neurotoxin 1</fullName>
    </recommendedName>
    <alternativeName>
        <fullName>Toxin 4</fullName>
    </alternativeName>
</protein>
<proteinExistence type="evidence at protein level"/>
<evidence type="ECO:0000250" key="1">
    <source>
        <dbReference type="UniProtKB" id="P0C1Z0"/>
    </source>
</evidence>
<evidence type="ECO:0000250" key="2">
    <source>
        <dbReference type="UniProtKB" id="P60775"/>
    </source>
</evidence>
<evidence type="ECO:0000269" key="3">
    <source>
    </source>
</evidence>
<evidence type="ECO:0000305" key="4"/>